<organism>
    <name type="scientific">Acetivibrio thermocellus (strain ATCC 27405 / DSM 1237 / JCM 9322 / NBRC 103400 / NCIMB 10682 / NRRL B-4536 / VPI 7372)</name>
    <name type="common">Clostridium thermocellum</name>
    <dbReference type="NCBI Taxonomy" id="203119"/>
    <lineage>
        <taxon>Bacteria</taxon>
        <taxon>Bacillati</taxon>
        <taxon>Bacillota</taxon>
        <taxon>Clostridia</taxon>
        <taxon>Eubacteriales</taxon>
        <taxon>Oscillospiraceae</taxon>
        <taxon>Acetivibrio</taxon>
    </lineage>
</organism>
<feature type="chain" id="PRO_0000341007" description="Ribosome-recycling factor">
    <location>
        <begin position="1"/>
        <end position="183"/>
    </location>
</feature>
<accession>A3DE56</accession>
<dbReference type="EMBL" id="CP000568">
    <property type="protein sequence ID" value="ABN52235.1"/>
    <property type="molecule type" value="Genomic_DNA"/>
</dbReference>
<dbReference type="RefSeq" id="WP_011837943.1">
    <property type="nucleotide sequence ID" value="NC_009012.1"/>
</dbReference>
<dbReference type="SMR" id="A3DE56"/>
<dbReference type="STRING" id="203119.Cthe_1003"/>
<dbReference type="GeneID" id="35804083"/>
<dbReference type="KEGG" id="cth:Cthe_1003"/>
<dbReference type="eggNOG" id="COG0233">
    <property type="taxonomic scope" value="Bacteria"/>
</dbReference>
<dbReference type="HOGENOM" id="CLU_073981_2_0_9"/>
<dbReference type="Proteomes" id="UP000002145">
    <property type="component" value="Chromosome"/>
</dbReference>
<dbReference type="GO" id="GO:0005737">
    <property type="term" value="C:cytoplasm"/>
    <property type="evidence" value="ECO:0007669"/>
    <property type="project" value="UniProtKB-SubCell"/>
</dbReference>
<dbReference type="GO" id="GO:0043023">
    <property type="term" value="F:ribosomal large subunit binding"/>
    <property type="evidence" value="ECO:0007669"/>
    <property type="project" value="TreeGrafter"/>
</dbReference>
<dbReference type="GO" id="GO:0006415">
    <property type="term" value="P:translational termination"/>
    <property type="evidence" value="ECO:0007669"/>
    <property type="project" value="UniProtKB-UniRule"/>
</dbReference>
<dbReference type="CDD" id="cd00520">
    <property type="entry name" value="RRF"/>
    <property type="match status" value="1"/>
</dbReference>
<dbReference type="FunFam" id="1.10.132.20:FF:000001">
    <property type="entry name" value="Ribosome-recycling factor"/>
    <property type="match status" value="1"/>
</dbReference>
<dbReference type="FunFam" id="3.30.1360.40:FF:000001">
    <property type="entry name" value="Ribosome-recycling factor"/>
    <property type="match status" value="1"/>
</dbReference>
<dbReference type="Gene3D" id="3.30.1360.40">
    <property type="match status" value="1"/>
</dbReference>
<dbReference type="Gene3D" id="1.10.132.20">
    <property type="entry name" value="Ribosome-recycling factor"/>
    <property type="match status" value="1"/>
</dbReference>
<dbReference type="HAMAP" id="MF_00040">
    <property type="entry name" value="RRF"/>
    <property type="match status" value="1"/>
</dbReference>
<dbReference type="InterPro" id="IPR002661">
    <property type="entry name" value="Ribosome_recyc_fac"/>
</dbReference>
<dbReference type="InterPro" id="IPR023584">
    <property type="entry name" value="Ribosome_recyc_fac_dom"/>
</dbReference>
<dbReference type="InterPro" id="IPR036191">
    <property type="entry name" value="RRF_sf"/>
</dbReference>
<dbReference type="NCBIfam" id="TIGR00496">
    <property type="entry name" value="frr"/>
    <property type="match status" value="1"/>
</dbReference>
<dbReference type="PANTHER" id="PTHR20982:SF3">
    <property type="entry name" value="MITOCHONDRIAL RIBOSOME RECYCLING FACTOR PSEUDO 1"/>
    <property type="match status" value="1"/>
</dbReference>
<dbReference type="PANTHER" id="PTHR20982">
    <property type="entry name" value="RIBOSOME RECYCLING FACTOR"/>
    <property type="match status" value="1"/>
</dbReference>
<dbReference type="Pfam" id="PF01765">
    <property type="entry name" value="RRF"/>
    <property type="match status" value="1"/>
</dbReference>
<dbReference type="SUPFAM" id="SSF55194">
    <property type="entry name" value="Ribosome recycling factor, RRF"/>
    <property type="match status" value="1"/>
</dbReference>
<reference key="1">
    <citation type="submission" date="2007-02" db="EMBL/GenBank/DDBJ databases">
        <title>Complete sequence of Clostridium thermocellum ATCC 27405.</title>
        <authorList>
            <consortium name="US DOE Joint Genome Institute"/>
            <person name="Copeland A."/>
            <person name="Lucas S."/>
            <person name="Lapidus A."/>
            <person name="Barry K."/>
            <person name="Detter J.C."/>
            <person name="Glavina del Rio T."/>
            <person name="Hammon N."/>
            <person name="Israni S."/>
            <person name="Dalin E."/>
            <person name="Tice H."/>
            <person name="Pitluck S."/>
            <person name="Chertkov O."/>
            <person name="Brettin T."/>
            <person name="Bruce D."/>
            <person name="Han C."/>
            <person name="Tapia R."/>
            <person name="Gilna P."/>
            <person name="Schmutz J."/>
            <person name="Larimer F."/>
            <person name="Land M."/>
            <person name="Hauser L."/>
            <person name="Kyrpides N."/>
            <person name="Mikhailova N."/>
            <person name="Wu J.H.D."/>
            <person name="Newcomb M."/>
            <person name="Richardson P."/>
        </authorList>
    </citation>
    <scope>NUCLEOTIDE SEQUENCE [LARGE SCALE GENOMIC DNA]</scope>
    <source>
        <strain>ATCC 27405 / DSM 1237 / JCM 9322 / NBRC 103400 / NCIMB 10682 / NRRL B-4536 / VPI 7372</strain>
    </source>
</reference>
<keyword id="KW-0963">Cytoplasm</keyword>
<keyword id="KW-0648">Protein biosynthesis</keyword>
<keyword id="KW-1185">Reference proteome</keyword>
<name>RRF_ACET2</name>
<evidence type="ECO:0000255" key="1">
    <source>
        <dbReference type="HAMAP-Rule" id="MF_00040"/>
    </source>
</evidence>
<comment type="function">
    <text evidence="1">Responsible for the release of ribosomes from messenger RNA at the termination of protein biosynthesis. May increase the efficiency of translation by recycling ribosomes from one round of translation to another.</text>
</comment>
<comment type="subcellular location">
    <subcellularLocation>
        <location evidence="1">Cytoplasm</location>
    </subcellularLocation>
</comment>
<comment type="similarity">
    <text evidence="1">Belongs to the RRF family.</text>
</comment>
<protein>
    <recommendedName>
        <fullName evidence="1">Ribosome-recycling factor</fullName>
        <shortName evidence="1">RRF</shortName>
    </recommendedName>
    <alternativeName>
        <fullName evidence="1">Ribosome-releasing factor</fullName>
    </alternativeName>
</protein>
<sequence length="183" mass="20941">MDEYKNIEEKMKKTVSVLKDELNTVRAGRANAAILDRITVDYYGVPTPINQLGTISVPEPRVIVIQPWDAQILKEIEKEIQKSDIGINPNNDGKVIRLVFPPLTEERRKELTKLAKKYGEDAKVAIRSIRRDGIEKKKAMKKNGEITEDDLKSAEKDIQNLTDKYIAEIDKLIEIKEKEILEV</sequence>
<gene>
    <name evidence="1" type="primary">frr</name>
    <name type="ordered locus">Cthe_1003</name>
</gene>
<proteinExistence type="inferred from homology"/>